<gene>
    <name evidence="1" type="primary">pnp</name>
    <name type="ordered locus">Jann_4028</name>
</gene>
<name>PNP_JANSC</name>
<proteinExistence type="inferred from homology"/>
<evidence type="ECO:0000255" key="1">
    <source>
        <dbReference type="HAMAP-Rule" id="MF_01595"/>
    </source>
</evidence>
<sequence>MFNIVKKEIQWGEETLTLETGRVARQADGSVIATLGETSVMANVTFAKSPKPGMDFFPLTVHYQEKYYAAGKVPGGFFKREARPTEKETLTARLIDRPIRPLFVPGFKNETLVMCTVLSHDLVNDPDMVAMIAASAALTISGAPFRGPIAGCRVGFEDGEYILNPEIDDMHDLRNNPEQRLDLVVAGTKDAVMMVESEAYELTEAEMLGAVKFAHDSIQPVIDLIIDLAEDAAKEPFDFQAPDYSELFEAVKAAGEDKMREAYAITDKLERQAAVSAVKEGVKEGLSEEQLEDPNLSAALKKLESTVLRSDVVKNGRRIDGRALDEVRDIVSETKVLPRTHGSALFTRGETQGLVVTTLGTGDDEQFIDALHGNFKSNFLLHYNFPPYSVGEAGRVGPPGRREIGHGKLAWRALQAVLPAATDFPYTVRVVSEITESNGSSSMASVCGGSLSMMDAGVPLKAPVAGVAMGLVLEDDGSYGILTDILGDEDHLGDMDFKVAGTEAGITSLQMDIKVAGITQEIMEKALEQAKAGRLHILAEMAKAVTEAGEFSEHAPRIETMQIPTDKIREVIGSGGKVIREIVEVSGAKVDINDEGIIKIASPNGDSIQKAYDMIHSIVAEPEEGKIYKGKVVKIVDFGAFVNFFGKRDGLVHVSQIKNERLNHPSDVLSEGQEVWVKLLGFDDRGKVRLAMKMVNQETGEEGAAE</sequence>
<comment type="function">
    <text evidence="1">Involved in mRNA degradation. Catalyzes the phosphorolysis of single-stranded polyribonucleotides processively in the 3'- to 5'-direction.</text>
</comment>
<comment type="catalytic activity">
    <reaction evidence="1">
        <text>RNA(n+1) + phosphate = RNA(n) + a ribonucleoside 5'-diphosphate</text>
        <dbReference type="Rhea" id="RHEA:22096"/>
        <dbReference type="Rhea" id="RHEA-COMP:14527"/>
        <dbReference type="Rhea" id="RHEA-COMP:17342"/>
        <dbReference type="ChEBI" id="CHEBI:43474"/>
        <dbReference type="ChEBI" id="CHEBI:57930"/>
        <dbReference type="ChEBI" id="CHEBI:140395"/>
        <dbReference type="EC" id="2.7.7.8"/>
    </reaction>
</comment>
<comment type="cofactor">
    <cofactor evidence="1">
        <name>Mg(2+)</name>
        <dbReference type="ChEBI" id="CHEBI:18420"/>
    </cofactor>
</comment>
<comment type="subcellular location">
    <subcellularLocation>
        <location evidence="1">Cytoplasm</location>
    </subcellularLocation>
</comment>
<comment type="similarity">
    <text evidence="1">Belongs to the polyribonucleotide nucleotidyltransferase family.</text>
</comment>
<accession>Q28K17</accession>
<feature type="chain" id="PRO_0000329684" description="Polyribonucleotide nucleotidyltransferase">
    <location>
        <begin position="1"/>
        <end position="706"/>
    </location>
</feature>
<feature type="domain" description="KH" evidence="1">
    <location>
        <begin position="556"/>
        <end position="615"/>
    </location>
</feature>
<feature type="domain" description="S1 motif" evidence="1">
    <location>
        <begin position="625"/>
        <end position="693"/>
    </location>
</feature>
<feature type="binding site" evidence="1">
    <location>
        <position position="490"/>
    </location>
    <ligand>
        <name>Mg(2+)</name>
        <dbReference type="ChEBI" id="CHEBI:18420"/>
    </ligand>
</feature>
<feature type="binding site" evidence="1">
    <location>
        <position position="496"/>
    </location>
    <ligand>
        <name>Mg(2+)</name>
        <dbReference type="ChEBI" id="CHEBI:18420"/>
    </ligand>
</feature>
<protein>
    <recommendedName>
        <fullName evidence="1">Polyribonucleotide nucleotidyltransferase</fullName>
        <ecNumber evidence="1">2.7.7.8</ecNumber>
    </recommendedName>
    <alternativeName>
        <fullName evidence="1">Polynucleotide phosphorylase</fullName>
        <shortName evidence="1">PNPase</shortName>
    </alternativeName>
</protein>
<organism>
    <name type="scientific">Jannaschia sp. (strain CCS1)</name>
    <dbReference type="NCBI Taxonomy" id="290400"/>
    <lineage>
        <taxon>Bacteria</taxon>
        <taxon>Pseudomonadati</taxon>
        <taxon>Pseudomonadota</taxon>
        <taxon>Alphaproteobacteria</taxon>
        <taxon>Rhodobacterales</taxon>
        <taxon>Roseobacteraceae</taxon>
        <taxon>Jannaschia</taxon>
    </lineage>
</organism>
<reference key="1">
    <citation type="submission" date="2006-02" db="EMBL/GenBank/DDBJ databases">
        <title>Complete sequence of chromosome of Jannaschia sp. CCS1.</title>
        <authorList>
            <consortium name="US DOE Joint Genome Institute"/>
            <person name="Copeland A."/>
            <person name="Lucas S."/>
            <person name="Lapidus A."/>
            <person name="Barry K."/>
            <person name="Detter J.C."/>
            <person name="Glavina del Rio T."/>
            <person name="Hammon N."/>
            <person name="Israni S."/>
            <person name="Pitluck S."/>
            <person name="Brettin T."/>
            <person name="Bruce D."/>
            <person name="Han C."/>
            <person name="Tapia R."/>
            <person name="Gilna P."/>
            <person name="Chertkov O."/>
            <person name="Saunders E."/>
            <person name="Schmutz J."/>
            <person name="Larimer F."/>
            <person name="Land M."/>
            <person name="Kyrpides N."/>
            <person name="Lykidis A."/>
            <person name="Moran M.A."/>
            <person name="Belas R."/>
            <person name="Ye W."/>
            <person name="Buchan A."/>
            <person name="Gonzalez J.M."/>
            <person name="Schell M.A."/>
            <person name="Richardson P."/>
        </authorList>
    </citation>
    <scope>NUCLEOTIDE SEQUENCE [LARGE SCALE GENOMIC DNA]</scope>
    <source>
        <strain>CCS1</strain>
    </source>
</reference>
<dbReference type="EC" id="2.7.7.8" evidence="1"/>
<dbReference type="EMBL" id="CP000264">
    <property type="protein sequence ID" value="ABD56945.1"/>
    <property type="molecule type" value="Genomic_DNA"/>
</dbReference>
<dbReference type="RefSeq" id="WP_011457141.1">
    <property type="nucleotide sequence ID" value="NC_007802.1"/>
</dbReference>
<dbReference type="SMR" id="Q28K17"/>
<dbReference type="STRING" id="290400.Jann_4028"/>
<dbReference type="KEGG" id="jan:Jann_4028"/>
<dbReference type="eggNOG" id="COG1185">
    <property type="taxonomic scope" value="Bacteria"/>
</dbReference>
<dbReference type="HOGENOM" id="CLU_004217_2_2_5"/>
<dbReference type="OrthoDB" id="9804305at2"/>
<dbReference type="Proteomes" id="UP000008326">
    <property type="component" value="Chromosome"/>
</dbReference>
<dbReference type="GO" id="GO:0005829">
    <property type="term" value="C:cytosol"/>
    <property type="evidence" value="ECO:0007669"/>
    <property type="project" value="TreeGrafter"/>
</dbReference>
<dbReference type="GO" id="GO:0000175">
    <property type="term" value="F:3'-5'-RNA exonuclease activity"/>
    <property type="evidence" value="ECO:0007669"/>
    <property type="project" value="TreeGrafter"/>
</dbReference>
<dbReference type="GO" id="GO:0000287">
    <property type="term" value="F:magnesium ion binding"/>
    <property type="evidence" value="ECO:0007669"/>
    <property type="project" value="UniProtKB-UniRule"/>
</dbReference>
<dbReference type="GO" id="GO:0004654">
    <property type="term" value="F:polyribonucleotide nucleotidyltransferase activity"/>
    <property type="evidence" value="ECO:0007669"/>
    <property type="project" value="UniProtKB-UniRule"/>
</dbReference>
<dbReference type="GO" id="GO:0003723">
    <property type="term" value="F:RNA binding"/>
    <property type="evidence" value="ECO:0007669"/>
    <property type="project" value="UniProtKB-UniRule"/>
</dbReference>
<dbReference type="GO" id="GO:0006402">
    <property type="term" value="P:mRNA catabolic process"/>
    <property type="evidence" value="ECO:0007669"/>
    <property type="project" value="UniProtKB-UniRule"/>
</dbReference>
<dbReference type="GO" id="GO:0006396">
    <property type="term" value="P:RNA processing"/>
    <property type="evidence" value="ECO:0007669"/>
    <property type="project" value="InterPro"/>
</dbReference>
<dbReference type="CDD" id="cd02393">
    <property type="entry name" value="KH-I_PNPase"/>
    <property type="match status" value="1"/>
</dbReference>
<dbReference type="CDD" id="cd11363">
    <property type="entry name" value="RNase_PH_PNPase_1"/>
    <property type="match status" value="1"/>
</dbReference>
<dbReference type="CDD" id="cd11364">
    <property type="entry name" value="RNase_PH_PNPase_2"/>
    <property type="match status" value="1"/>
</dbReference>
<dbReference type="CDD" id="cd04472">
    <property type="entry name" value="S1_PNPase"/>
    <property type="match status" value="1"/>
</dbReference>
<dbReference type="FunFam" id="2.40.50.140:FF:000107">
    <property type="entry name" value="Polyribonucleotide nucleotidyltransferase"/>
    <property type="match status" value="1"/>
</dbReference>
<dbReference type="FunFam" id="3.30.1370.10:FF:000001">
    <property type="entry name" value="Polyribonucleotide nucleotidyltransferase"/>
    <property type="match status" value="1"/>
</dbReference>
<dbReference type="FunFam" id="3.30.230.70:FF:000001">
    <property type="entry name" value="Polyribonucleotide nucleotidyltransferase"/>
    <property type="match status" value="1"/>
</dbReference>
<dbReference type="FunFam" id="3.30.230.70:FF:000002">
    <property type="entry name" value="Polyribonucleotide nucleotidyltransferase"/>
    <property type="match status" value="1"/>
</dbReference>
<dbReference type="Gene3D" id="3.30.230.70">
    <property type="entry name" value="GHMP Kinase, N-terminal domain"/>
    <property type="match status" value="2"/>
</dbReference>
<dbReference type="Gene3D" id="3.30.1370.10">
    <property type="entry name" value="K Homology domain, type 1"/>
    <property type="match status" value="1"/>
</dbReference>
<dbReference type="Gene3D" id="2.40.50.140">
    <property type="entry name" value="Nucleic acid-binding proteins"/>
    <property type="match status" value="1"/>
</dbReference>
<dbReference type="HAMAP" id="MF_01595">
    <property type="entry name" value="PNPase"/>
    <property type="match status" value="1"/>
</dbReference>
<dbReference type="InterPro" id="IPR001247">
    <property type="entry name" value="ExoRNase_PH_dom1"/>
</dbReference>
<dbReference type="InterPro" id="IPR015847">
    <property type="entry name" value="ExoRNase_PH_dom2"/>
</dbReference>
<dbReference type="InterPro" id="IPR036345">
    <property type="entry name" value="ExoRNase_PH_dom2_sf"/>
</dbReference>
<dbReference type="InterPro" id="IPR004087">
    <property type="entry name" value="KH_dom"/>
</dbReference>
<dbReference type="InterPro" id="IPR004088">
    <property type="entry name" value="KH_dom_type_1"/>
</dbReference>
<dbReference type="InterPro" id="IPR036612">
    <property type="entry name" value="KH_dom_type_1_sf"/>
</dbReference>
<dbReference type="InterPro" id="IPR012340">
    <property type="entry name" value="NA-bd_OB-fold"/>
</dbReference>
<dbReference type="InterPro" id="IPR012162">
    <property type="entry name" value="PNPase"/>
</dbReference>
<dbReference type="InterPro" id="IPR027408">
    <property type="entry name" value="PNPase/RNase_PH_dom_sf"/>
</dbReference>
<dbReference type="InterPro" id="IPR015848">
    <property type="entry name" value="PNPase_PH_RNA-bd_bac/org-type"/>
</dbReference>
<dbReference type="InterPro" id="IPR036456">
    <property type="entry name" value="PNPase_PH_RNA-bd_sf"/>
</dbReference>
<dbReference type="InterPro" id="IPR020568">
    <property type="entry name" value="Ribosomal_Su5_D2-typ_SF"/>
</dbReference>
<dbReference type="InterPro" id="IPR003029">
    <property type="entry name" value="S1_domain"/>
</dbReference>
<dbReference type="NCBIfam" id="TIGR03591">
    <property type="entry name" value="polynuc_phos"/>
    <property type="match status" value="1"/>
</dbReference>
<dbReference type="NCBIfam" id="NF008805">
    <property type="entry name" value="PRK11824.1"/>
    <property type="match status" value="1"/>
</dbReference>
<dbReference type="PANTHER" id="PTHR11252">
    <property type="entry name" value="POLYRIBONUCLEOTIDE NUCLEOTIDYLTRANSFERASE"/>
    <property type="match status" value="1"/>
</dbReference>
<dbReference type="PANTHER" id="PTHR11252:SF0">
    <property type="entry name" value="POLYRIBONUCLEOTIDE NUCLEOTIDYLTRANSFERASE 1, MITOCHONDRIAL"/>
    <property type="match status" value="1"/>
</dbReference>
<dbReference type="Pfam" id="PF00013">
    <property type="entry name" value="KH_1"/>
    <property type="match status" value="1"/>
</dbReference>
<dbReference type="Pfam" id="PF03726">
    <property type="entry name" value="PNPase"/>
    <property type="match status" value="1"/>
</dbReference>
<dbReference type="Pfam" id="PF01138">
    <property type="entry name" value="RNase_PH"/>
    <property type="match status" value="2"/>
</dbReference>
<dbReference type="Pfam" id="PF03725">
    <property type="entry name" value="RNase_PH_C"/>
    <property type="match status" value="2"/>
</dbReference>
<dbReference type="Pfam" id="PF00575">
    <property type="entry name" value="S1"/>
    <property type="match status" value="1"/>
</dbReference>
<dbReference type="PIRSF" id="PIRSF005499">
    <property type="entry name" value="PNPase"/>
    <property type="match status" value="1"/>
</dbReference>
<dbReference type="SMART" id="SM00322">
    <property type="entry name" value="KH"/>
    <property type="match status" value="1"/>
</dbReference>
<dbReference type="SMART" id="SM00316">
    <property type="entry name" value="S1"/>
    <property type="match status" value="1"/>
</dbReference>
<dbReference type="SUPFAM" id="SSF54791">
    <property type="entry name" value="Eukaryotic type KH-domain (KH-domain type I)"/>
    <property type="match status" value="1"/>
</dbReference>
<dbReference type="SUPFAM" id="SSF50249">
    <property type="entry name" value="Nucleic acid-binding proteins"/>
    <property type="match status" value="1"/>
</dbReference>
<dbReference type="SUPFAM" id="SSF46915">
    <property type="entry name" value="Polynucleotide phosphorylase/guanosine pentaphosphate synthase (PNPase/GPSI), domain 3"/>
    <property type="match status" value="1"/>
</dbReference>
<dbReference type="SUPFAM" id="SSF55666">
    <property type="entry name" value="Ribonuclease PH domain 2-like"/>
    <property type="match status" value="2"/>
</dbReference>
<dbReference type="SUPFAM" id="SSF54211">
    <property type="entry name" value="Ribosomal protein S5 domain 2-like"/>
    <property type="match status" value="2"/>
</dbReference>
<dbReference type="PROSITE" id="PS50084">
    <property type="entry name" value="KH_TYPE_1"/>
    <property type="match status" value="1"/>
</dbReference>
<dbReference type="PROSITE" id="PS50126">
    <property type="entry name" value="S1"/>
    <property type="match status" value="1"/>
</dbReference>
<keyword id="KW-0963">Cytoplasm</keyword>
<keyword id="KW-0460">Magnesium</keyword>
<keyword id="KW-0479">Metal-binding</keyword>
<keyword id="KW-0548">Nucleotidyltransferase</keyword>
<keyword id="KW-1185">Reference proteome</keyword>
<keyword id="KW-0694">RNA-binding</keyword>
<keyword id="KW-0808">Transferase</keyword>